<feature type="chain" id="PRO_0000363135" description="UPF0725 protein At5g41640">
    <location>
        <begin position="1"/>
        <end position="197"/>
    </location>
</feature>
<organism>
    <name type="scientific">Arabidopsis thaliana</name>
    <name type="common">Mouse-ear cress</name>
    <dbReference type="NCBI Taxonomy" id="3702"/>
    <lineage>
        <taxon>Eukaryota</taxon>
        <taxon>Viridiplantae</taxon>
        <taxon>Streptophyta</taxon>
        <taxon>Embryophyta</taxon>
        <taxon>Tracheophyta</taxon>
        <taxon>Spermatophyta</taxon>
        <taxon>Magnoliopsida</taxon>
        <taxon>eudicotyledons</taxon>
        <taxon>Gunneridae</taxon>
        <taxon>Pentapetalae</taxon>
        <taxon>rosids</taxon>
        <taxon>malvids</taxon>
        <taxon>Brassicales</taxon>
        <taxon>Brassicaceae</taxon>
        <taxon>Camelineae</taxon>
        <taxon>Arabidopsis</taxon>
    </lineage>
</organism>
<protein>
    <recommendedName>
        <fullName>UPF0725 protein At5g41640</fullName>
    </recommendedName>
</protein>
<accession>Q9FFR6</accession>
<sequence>MSRLVQTMLLWLKSEKGFDTTEASDGPELQKSICDKRWSPCCTLVRLYARMGLHRYNLLKLSRVKKYNMSTHYAAFATTHRSNGKYHDLSDLKIFESSEDVEPPNEVSLNVINVIVYIVYKDFYESRLVRMLIAKLLLNEASMSIMDASLSRVEIRLSNPIWVWSDIYECPTQKLNDMSFSYIPETYLVIKIKSTKY</sequence>
<comment type="similarity">
    <text evidence="1">Belongs to the UPF0725 (EMB2204) family.</text>
</comment>
<keyword id="KW-1185">Reference proteome</keyword>
<dbReference type="EMBL" id="AB005233">
    <property type="protein sequence ID" value="BAB11470.1"/>
    <property type="molecule type" value="Genomic_DNA"/>
</dbReference>
<dbReference type="EMBL" id="CP002688">
    <property type="protein sequence ID" value="AED94702.1"/>
    <property type="molecule type" value="Genomic_DNA"/>
</dbReference>
<dbReference type="RefSeq" id="NP_198979.1">
    <property type="nucleotide sequence ID" value="NM_123528.1"/>
</dbReference>
<dbReference type="STRING" id="3702.Q9FFR6"/>
<dbReference type="PaxDb" id="3702-AT5G41640.1"/>
<dbReference type="EnsemblPlants" id="AT5G41640.1">
    <property type="protein sequence ID" value="AT5G41640.1"/>
    <property type="gene ID" value="AT5G41640"/>
</dbReference>
<dbReference type="GeneID" id="834166"/>
<dbReference type="Gramene" id="AT5G41640.1">
    <property type="protein sequence ID" value="AT5G41640.1"/>
    <property type="gene ID" value="AT5G41640"/>
</dbReference>
<dbReference type="KEGG" id="ath:AT5G41640"/>
<dbReference type="Araport" id="AT5G41640"/>
<dbReference type="TAIR" id="AT5G41640"/>
<dbReference type="HOGENOM" id="CLU_1385894_0_0_1"/>
<dbReference type="InParanoid" id="Q9FFR6"/>
<dbReference type="PRO" id="PR:Q9FFR6"/>
<dbReference type="Proteomes" id="UP000006548">
    <property type="component" value="Chromosome 5"/>
</dbReference>
<dbReference type="ExpressionAtlas" id="Q9FFR6">
    <property type="expression patterns" value="baseline and differential"/>
</dbReference>
<dbReference type="InterPro" id="IPR006462">
    <property type="entry name" value="MS5"/>
</dbReference>
<dbReference type="PANTHER" id="PTHR31260:SF39">
    <property type="entry name" value="BNAA09G28770D PROTEIN"/>
    <property type="match status" value="1"/>
</dbReference>
<dbReference type="PANTHER" id="PTHR31260">
    <property type="entry name" value="CYSTATIN/MONELLIN SUPERFAMILY PROTEIN"/>
    <property type="match status" value="1"/>
</dbReference>
<reference key="1">
    <citation type="journal article" date="1997" name="DNA Res.">
        <title>Structural analysis of Arabidopsis thaliana chromosome 5. I. Sequence features of the 1.6 Mb regions covered by twenty physically assigned P1 clones.</title>
        <authorList>
            <person name="Sato S."/>
            <person name="Kotani H."/>
            <person name="Nakamura Y."/>
            <person name="Kaneko T."/>
            <person name="Asamizu E."/>
            <person name="Fukami M."/>
            <person name="Miyajima N."/>
            <person name="Tabata S."/>
        </authorList>
    </citation>
    <scope>NUCLEOTIDE SEQUENCE [LARGE SCALE GENOMIC DNA]</scope>
    <source>
        <strain>cv. Columbia</strain>
    </source>
</reference>
<reference key="2">
    <citation type="journal article" date="2017" name="Plant J.">
        <title>Araport11: a complete reannotation of the Arabidopsis thaliana reference genome.</title>
        <authorList>
            <person name="Cheng C.Y."/>
            <person name="Krishnakumar V."/>
            <person name="Chan A.P."/>
            <person name="Thibaud-Nissen F."/>
            <person name="Schobel S."/>
            <person name="Town C.D."/>
        </authorList>
    </citation>
    <scope>GENOME REANNOTATION</scope>
    <source>
        <strain>cv. Columbia</strain>
    </source>
</reference>
<gene>
    <name type="ordered locus">At5g41640</name>
    <name type="ORF">MBK23.16</name>
</gene>
<name>Y5416_ARATH</name>
<evidence type="ECO:0000305" key="1"/>
<proteinExistence type="inferred from homology"/>